<proteinExistence type="inferred from homology"/>
<reference key="1">
    <citation type="journal article" date="2005" name="Science">
        <title>Life at depth: Photobacterium profundum genome sequence and expression analysis.</title>
        <authorList>
            <person name="Vezzi A."/>
            <person name="Campanaro S."/>
            <person name="D'Angelo M."/>
            <person name="Simonato F."/>
            <person name="Vitulo N."/>
            <person name="Lauro F.M."/>
            <person name="Cestaro A."/>
            <person name="Malacrida G."/>
            <person name="Simionati B."/>
            <person name="Cannata N."/>
            <person name="Romualdi C."/>
            <person name="Bartlett D.H."/>
            <person name="Valle G."/>
        </authorList>
    </citation>
    <scope>NUCLEOTIDE SEQUENCE [LARGE SCALE GENOMIC DNA]</scope>
    <source>
        <strain>ATCC BAA-1253 / SS9</strain>
    </source>
</reference>
<organism>
    <name type="scientific">Photobacterium profundum (strain SS9)</name>
    <dbReference type="NCBI Taxonomy" id="298386"/>
    <lineage>
        <taxon>Bacteria</taxon>
        <taxon>Pseudomonadati</taxon>
        <taxon>Pseudomonadota</taxon>
        <taxon>Gammaproteobacteria</taxon>
        <taxon>Vibrionales</taxon>
        <taxon>Vibrionaceae</taxon>
        <taxon>Photobacterium</taxon>
    </lineage>
</organism>
<accession>Q6LR96</accession>
<keyword id="KW-0963">Cytoplasm</keyword>
<keyword id="KW-0275">Fatty acid biosynthesis</keyword>
<keyword id="KW-0276">Fatty acid metabolism</keyword>
<keyword id="KW-0413">Isomerase</keyword>
<keyword id="KW-0444">Lipid biosynthesis</keyword>
<keyword id="KW-0443">Lipid metabolism</keyword>
<keyword id="KW-0456">Lyase</keyword>
<keyword id="KW-1185">Reference proteome</keyword>
<comment type="function">
    <text evidence="1">Necessary for the introduction of cis unsaturation into fatty acids. Catalyzes the dehydration of (3R)-3-hydroxydecanoyl-ACP to E-(2)-decenoyl-ACP and then its isomerization to Z-(3)-decenoyl-ACP. Can catalyze the dehydratase reaction for beta-hydroxyacyl-ACPs with saturated chain lengths up to 16:0, being most active on intermediate chain length.</text>
</comment>
<comment type="catalytic activity">
    <reaction evidence="1">
        <text>a (3R)-hydroxyacyl-[ACP] = a (2E)-enoyl-[ACP] + H2O</text>
        <dbReference type="Rhea" id="RHEA:13097"/>
        <dbReference type="Rhea" id="RHEA-COMP:9925"/>
        <dbReference type="Rhea" id="RHEA-COMP:9945"/>
        <dbReference type="ChEBI" id="CHEBI:15377"/>
        <dbReference type="ChEBI" id="CHEBI:78784"/>
        <dbReference type="ChEBI" id="CHEBI:78827"/>
        <dbReference type="EC" id="4.2.1.59"/>
    </reaction>
</comment>
<comment type="catalytic activity">
    <reaction evidence="1">
        <text>(3R)-hydroxydecanoyl-[ACP] = (2E)-decenoyl-[ACP] + H2O</text>
        <dbReference type="Rhea" id="RHEA:41860"/>
        <dbReference type="Rhea" id="RHEA-COMP:9638"/>
        <dbReference type="Rhea" id="RHEA-COMP:9639"/>
        <dbReference type="ChEBI" id="CHEBI:15377"/>
        <dbReference type="ChEBI" id="CHEBI:78466"/>
        <dbReference type="ChEBI" id="CHEBI:78467"/>
    </reaction>
</comment>
<comment type="catalytic activity">
    <reaction evidence="1">
        <text>(2E)-decenoyl-[ACP] = (3Z)-decenoyl-[ACP]</text>
        <dbReference type="Rhea" id="RHEA:23568"/>
        <dbReference type="Rhea" id="RHEA-COMP:9639"/>
        <dbReference type="Rhea" id="RHEA-COMP:9927"/>
        <dbReference type="ChEBI" id="CHEBI:78467"/>
        <dbReference type="ChEBI" id="CHEBI:78798"/>
        <dbReference type="EC" id="5.3.3.14"/>
    </reaction>
</comment>
<comment type="pathway">
    <text evidence="1">Lipid metabolism; fatty acid biosynthesis.</text>
</comment>
<comment type="subunit">
    <text evidence="1">Homodimer.</text>
</comment>
<comment type="subcellular location">
    <subcellularLocation>
        <location evidence="1">Cytoplasm</location>
    </subcellularLocation>
</comment>
<comment type="similarity">
    <text evidence="1">Belongs to the thioester dehydratase family. FabA subfamily.</text>
</comment>
<evidence type="ECO:0000255" key="1">
    <source>
        <dbReference type="HAMAP-Rule" id="MF_00405"/>
    </source>
</evidence>
<protein>
    <recommendedName>
        <fullName evidence="1">3-hydroxydecanoyl-[acyl-carrier-protein] dehydratase</fullName>
        <ecNumber evidence="1">4.2.1.59</ecNumber>
    </recommendedName>
    <alternativeName>
        <fullName evidence="1">3-hydroxyacyl-[acyl-carrier-protein] dehydratase FabA</fullName>
    </alternativeName>
    <alternativeName>
        <fullName evidence="1">Beta-hydroxydecanoyl thioester dehydrase</fullName>
    </alternativeName>
    <alternativeName>
        <fullName evidence="1">Trans-2-decenoyl-[acyl-carrier-protein] isomerase</fullName>
        <ecNumber evidence="1">5.3.3.14</ecNumber>
    </alternativeName>
</protein>
<name>FABA_PHOPR</name>
<gene>
    <name evidence="1" type="primary">fabA</name>
    <name type="ordered locus">PBPRA1773</name>
</gene>
<dbReference type="EC" id="4.2.1.59" evidence="1"/>
<dbReference type="EC" id="5.3.3.14" evidence="1"/>
<dbReference type="EMBL" id="CR378668">
    <property type="protein sequence ID" value="CAG20180.1"/>
    <property type="molecule type" value="Genomic_DNA"/>
</dbReference>
<dbReference type="RefSeq" id="WP_011218488.1">
    <property type="nucleotide sequence ID" value="NC_006370.1"/>
</dbReference>
<dbReference type="SMR" id="Q6LR96"/>
<dbReference type="STRING" id="298386.PBPRA1773"/>
<dbReference type="KEGG" id="ppr:PBPRA1773"/>
<dbReference type="eggNOG" id="COG0764">
    <property type="taxonomic scope" value="Bacteria"/>
</dbReference>
<dbReference type="HOGENOM" id="CLU_097925_0_0_6"/>
<dbReference type="UniPathway" id="UPA00094"/>
<dbReference type="Proteomes" id="UP000000593">
    <property type="component" value="Chromosome 1"/>
</dbReference>
<dbReference type="GO" id="GO:0005737">
    <property type="term" value="C:cytoplasm"/>
    <property type="evidence" value="ECO:0007669"/>
    <property type="project" value="UniProtKB-SubCell"/>
</dbReference>
<dbReference type="GO" id="GO:0019171">
    <property type="term" value="F:(3R)-hydroxyacyl-[acyl-carrier-protein] dehydratase activity"/>
    <property type="evidence" value="ECO:0007669"/>
    <property type="project" value="UniProtKB-UniRule"/>
</dbReference>
<dbReference type="GO" id="GO:0034017">
    <property type="term" value="F:trans-2-decenoyl-acyl-carrier-protein isomerase activity"/>
    <property type="evidence" value="ECO:0007669"/>
    <property type="project" value="UniProtKB-UniRule"/>
</dbReference>
<dbReference type="GO" id="GO:0006636">
    <property type="term" value="P:unsaturated fatty acid biosynthetic process"/>
    <property type="evidence" value="ECO:0007669"/>
    <property type="project" value="UniProtKB-UniRule"/>
</dbReference>
<dbReference type="CDD" id="cd01287">
    <property type="entry name" value="FabA"/>
    <property type="match status" value="1"/>
</dbReference>
<dbReference type="Gene3D" id="3.10.129.10">
    <property type="entry name" value="Hotdog Thioesterase"/>
    <property type="match status" value="1"/>
</dbReference>
<dbReference type="HAMAP" id="MF_00405">
    <property type="entry name" value="FabA"/>
    <property type="match status" value="1"/>
</dbReference>
<dbReference type="InterPro" id="IPR010083">
    <property type="entry name" value="FabA"/>
</dbReference>
<dbReference type="InterPro" id="IPR013114">
    <property type="entry name" value="FabA_FabZ"/>
</dbReference>
<dbReference type="InterPro" id="IPR029069">
    <property type="entry name" value="HotDog_dom_sf"/>
</dbReference>
<dbReference type="NCBIfam" id="TIGR01749">
    <property type="entry name" value="fabA"/>
    <property type="match status" value="1"/>
</dbReference>
<dbReference type="NCBIfam" id="NF003509">
    <property type="entry name" value="PRK05174.1"/>
    <property type="match status" value="1"/>
</dbReference>
<dbReference type="PANTHER" id="PTHR30272">
    <property type="entry name" value="3-HYDROXYACYL-[ACYL-CARRIER-PROTEIN] DEHYDRATASE"/>
    <property type="match status" value="1"/>
</dbReference>
<dbReference type="PANTHER" id="PTHR30272:SF8">
    <property type="entry name" value="3-HYDROXYDECANOYL-[ACYL-CARRIER-PROTEIN] DEHYDRATASE"/>
    <property type="match status" value="1"/>
</dbReference>
<dbReference type="Pfam" id="PF07977">
    <property type="entry name" value="FabA"/>
    <property type="match status" value="1"/>
</dbReference>
<dbReference type="SUPFAM" id="SSF54637">
    <property type="entry name" value="Thioesterase/thiol ester dehydrase-isomerase"/>
    <property type="match status" value="1"/>
</dbReference>
<feature type="chain" id="PRO_0000091605" description="3-hydroxydecanoyl-[acyl-carrier-protein] dehydratase">
    <location>
        <begin position="1"/>
        <end position="171"/>
    </location>
</feature>
<feature type="active site" evidence="1">
    <location>
        <position position="70"/>
    </location>
</feature>
<sequence>MKRQQSFEYDELVACGKGELYGPAFPSLPSDNMLMIDRVIEISSEGGEHGKGFIHAELDINPDLWFFDCHFKGDPVMPGCLGLDAMWQLVGFFLGWQGGEGKGRALGVGEVKFTGQILPTAKKVTYDIQLKRVINRKLVMGVADGRVLVDGKEIYVAKDLKVGLFTDTTNF</sequence>